<accession>Q1JMC8</accession>
<reference key="1">
    <citation type="journal article" date="2006" name="Proc. Natl. Acad. Sci. U.S.A.">
        <title>Molecular genetic anatomy of inter- and intraserotype variation in the human bacterial pathogen group A Streptococcus.</title>
        <authorList>
            <person name="Beres S.B."/>
            <person name="Richter E.W."/>
            <person name="Nagiec M.J."/>
            <person name="Sumby P."/>
            <person name="Porcella S.F."/>
            <person name="DeLeo F.R."/>
            <person name="Musser J.M."/>
        </authorList>
    </citation>
    <scope>NUCLEOTIDE SEQUENCE [LARGE SCALE GENOMIC DNA]</scope>
    <source>
        <strain>MGAS9429</strain>
    </source>
</reference>
<evidence type="ECO:0000255" key="1">
    <source>
        <dbReference type="HAMAP-Rule" id="MF_00001"/>
    </source>
</evidence>
<evidence type="ECO:0000305" key="2"/>
<comment type="function">
    <text evidence="1">Catalyzes the condensation of carbamoyl phosphate and aspartate to form carbamoyl aspartate and inorganic phosphate, the committed step in the de novo pyrimidine nucleotide biosynthesis pathway.</text>
</comment>
<comment type="catalytic activity">
    <reaction evidence="1">
        <text>carbamoyl phosphate + L-aspartate = N-carbamoyl-L-aspartate + phosphate + H(+)</text>
        <dbReference type="Rhea" id="RHEA:20013"/>
        <dbReference type="ChEBI" id="CHEBI:15378"/>
        <dbReference type="ChEBI" id="CHEBI:29991"/>
        <dbReference type="ChEBI" id="CHEBI:32814"/>
        <dbReference type="ChEBI" id="CHEBI:43474"/>
        <dbReference type="ChEBI" id="CHEBI:58228"/>
        <dbReference type="EC" id="2.1.3.2"/>
    </reaction>
</comment>
<comment type="pathway">
    <text evidence="1">Pyrimidine metabolism; UMP biosynthesis via de novo pathway; (S)-dihydroorotate from bicarbonate: step 2/3.</text>
</comment>
<comment type="subunit">
    <text evidence="1">Heterododecamer (2C3:3R2) of six catalytic PyrB chains organized as two trimers (C3), and six regulatory PyrI chains organized as three dimers (R2).</text>
</comment>
<comment type="similarity">
    <text evidence="1">Belongs to the aspartate/ornithine carbamoyltransferase superfamily. ATCase family.</text>
</comment>
<comment type="sequence caution" evidence="2">
    <conflict type="erroneous initiation">
        <sequence resource="EMBL-CDS" id="ABF31884"/>
    </conflict>
</comment>
<proteinExistence type="inferred from homology"/>
<sequence>MSVVNNRVALTNLVSMEALTTEEVLGLINRGSEYKAGKVVISDHQKDLVANLFFENSTRTHKSFEVAEKKLGLTVLDFNADASAVNKGESLYDTVLTMSALGTDICVIRHPEDDYYKELVESPTITASIVNGGDGSGQHPSQCLLDLLTIYEEFGHFEGLKIAIAGDLTHSRVAKSNMQILKRLGAELYFYGPEEWYSEAFNAYGTYIAIDQIIKELDVLMLLRVQHERHDGHQSFSKEGYHQAFGLTQERYQQLKDSAIIMHPAPVNRDVEIADSLVEAPKARIVSQMANGVFVRMAIIEAILNGRNKNS</sequence>
<keyword id="KW-0665">Pyrimidine biosynthesis</keyword>
<keyword id="KW-0808">Transferase</keyword>
<name>PYRB_STRPC</name>
<gene>
    <name evidence="1" type="primary">pyrB</name>
    <name type="ordered locus">MGAS9429_Spy0696</name>
</gene>
<feature type="chain" id="PRO_0000321164" description="Aspartate carbamoyltransferase catalytic subunit">
    <location>
        <begin position="1"/>
        <end position="311"/>
    </location>
</feature>
<feature type="binding site" evidence="1">
    <location>
        <position position="59"/>
    </location>
    <ligand>
        <name>carbamoyl phosphate</name>
        <dbReference type="ChEBI" id="CHEBI:58228"/>
    </ligand>
</feature>
<feature type="binding site" evidence="1">
    <location>
        <position position="60"/>
    </location>
    <ligand>
        <name>carbamoyl phosphate</name>
        <dbReference type="ChEBI" id="CHEBI:58228"/>
    </ligand>
</feature>
<feature type="binding site" evidence="1">
    <location>
        <position position="87"/>
    </location>
    <ligand>
        <name>L-aspartate</name>
        <dbReference type="ChEBI" id="CHEBI:29991"/>
    </ligand>
</feature>
<feature type="binding site" evidence="1">
    <location>
        <position position="109"/>
    </location>
    <ligand>
        <name>carbamoyl phosphate</name>
        <dbReference type="ChEBI" id="CHEBI:58228"/>
    </ligand>
</feature>
<feature type="binding site" evidence="1">
    <location>
        <position position="139"/>
    </location>
    <ligand>
        <name>carbamoyl phosphate</name>
        <dbReference type="ChEBI" id="CHEBI:58228"/>
    </ligand>
</feature>
<feature type="binding site" evidence="1">
    <location>
        <position position="142"/>
    </location>
    <ligand>
        <name>carbamoyl phosphate</name>
        <dbReference type="ChEBI" id="CHEBI:58228"/>
    </ligand>
</feature>
<feature type="binding site" evidence="1">
    <location>
        <position position="172"/>
    </location>
    <ligand>
        <name>L-aspartate</name>
        <dbReference type="ChEBI" id="CHEBI:29991"/>
    </ligand>
</feature>
<feature type="binding site" evidence="1">
    <location>
        <position position="224"/>
    </location>
    <ligand>
        <name>L-aspartate</name>
        <dbReference type="ChEBI" id="CHEBI:29991"/>
    </ligand>
</feature>
<feature type="binding site" evidence="1">
    <location>
        <position position="265"/>
    </location>
    <ligand>
        <name>carbamoyl phosphate</name>
        <dbReference type="ChEBI" id="CHEBI:58228"/>
    </ligand>
</feature>
<feature type="binding site" evidence="1">
    <location>
        <position position="266"/>
    </location>
    <ligand>
        <name>carbamoyl phosphate</name>
        <dbReference type="ChEBI" id="CHEBI:58228"/>
    </ligand>
</feature>
<dbReference type="EC" id="2.1.3.2" evidence="1"/>
<dbReference type="EMBL" id="CP000259">
    <property type="protein sequence ID" value="ABF31884.1"/>
    <property type="status" value="ALT_INIT"/>
    <property type="molecule type" value="Genomic_DNA"/>
</dbReference>
<dbReference type="RefSeq" id="WP_002990243.1">
    <property type="nucleotide sequence ID" value="NC_008021.1"/>
</dbReference>
<dbReference type="SMR" id="Q1JMC8"/>
<dbReference type="KEGG" id="spk:MGAS9429_Spy0696"/>
<dbReference type="HOGENOM" id="CLU_043846_2_1_9"/>
<dbReference type="UniPathway" id="UPA00070">
    <property type="reaction ID" value="UER00116"/>
</dbReference>
<dbReference type="Proteomes" id="UP000002433">
    <property type="component" value="Chromosome"/>
</dbReference>
<dbReference type="GO" id="GO:0005829">
    <property type="term" value="C:cytosol"/>
    <property type="evidence" value="ECO:0007669"/>
    <property type="project" value="TreeGrafter"/>
</dbReference>
<dbReference type="GO" id="GO:0016597">
    <property type="term" value="F:amino acid binding"/>
    <property type="evidence" value="ECO:0007669"/>
    <property type="project" value="InterPro"/>
</dbReference>
<dbReference type="GO" id="GO:0004070">
    <property type="term" value="F:aspartate carbamoyltransferase activity"/>
    <property type="evidence" value="ECO:0007669"/>
    <property type="project" value="UniProtKB-UniRule"/>
</dbReference>
<dbReference type="GO" id="GO:0006207">
    <property type="term" value="P:'de novo' pyrimidine nucleobase biosynthetic process"/>
    <property type="evidence" value="ECO:0007669"/>
    <property type="project" value="InterPro"/>
</dbReference>
<dbReference type="GO" id="GO:0044205">
    <property type="term" value="P:'de novo' UMP biosynthetic process"/>
    <property type="evidence" value="ECO:0007669"/>
    <property type="project" value="UniProtKB-UniRule"/>
</dbReference>
<dbReference type="GO" id="GO:0006520">
    <property type="term" value="P:amino acid metabolic process"/>
    <property type="evidence" value="ECO:0007669"/>
    <property type="project" value="InterPro"/>
</dbReference>
<dbReference type="FunFam" id="3.40.50.1370:FF:000011">
    <property type="entry name" value="Aspartate carbamoyltransferase"/>
    <property type="match status" value="1"/>
</dbReference>
<dbReference type="Gene3D" id="3.40.50.1370">
    <property type="entry name" value="Aspartate/ornithine carbamoyltransferase"/>
    <property type="match status" value="2"/>
</dbReference>
<dbReference type="HAMAP" id="MF_00001">
    <property type="entry name" value="Asp_carb_tr"/>
    <property type="match status" value="1"/>
</dbReference>
<dbReference type="InterPro" id="IPR006132">
    <property type="entry name" value="Asp/Orn_carbamoyltranf_P-bd"/>
</dbReference>
<dbReference type="InterPro" id="IPR006130">
    <property type="entry name" value="Asp/Orn_carbamoylTrfase"/>
</dbReference>
<dbReference type="InterPro" id="IPR036901">
    <property type="entry name" value="Asp/Orn_carbamoylTrfase_sf"/>
</dbReference>
<dbReference type="InterPro" id="IPR002082">
    <property type="entry name" value="Asp_carbamoyltransf"/>
</dbReference>
<dbReference type="InterPro" id="IPR006131">
    <property type="entry name" value="Asp_carbamoyltransf_Asp/Orn-bd"/>
</dbReference>
<dbReference type="NCBIfam" id="TIGR00670">
    <property type="entry name" value="asp_carb_tr"/>
    <property type="match status" value="1"/>
</dbReference>
<dbReference type="NCBIfam" id="NF002032">
    <property type="entry name" value="PRK00856.1"/>
    <property type="match status" value="1"/>
</dbReference>
<dbReference type="PANTHER" id="PTHR45753:SF6">
    <property type="entry name" value="ASPARTATE CARBAMOYLTRANSFERASE"/>
    <property type="match status" value="1"/>
</dbReference>
<dbReference type="PANTHER" id="PTHR45753">
    <property type="entry name" value="ORNITHINE CARBAMOYLTRANSFERASE, MITOCHONDRIAL"/>
    <property type="match status" value="1"/>
</dbReference>
<dbReference type="Pfam" id="PF00185">
    <property type="entry name" value="OTCace"/>
    <property type="match status" value="1"/>
</dbReference>
<dbReference type="Pfam" id="PF02729">
    <property type="entry name" value="OTCace_N"/>
    <property type="match status" value="1"/>
</dbReference>
<dbReference type="PRINTS" id="PR00100">
    <property type="entry name" value="AOTCASE"/>
</dbReference>
<dbReference type="PRINTS" id="PR00101">
    <property type="entry name" value="ATCASE"/>
</dbReference>
<dbReference type="SUPFAM" id="SSF53671">
    <property type="entry name" value="Aspartate/ornithine carbamoyltransferase"/>
    <property type="match status" value="1"/>
</dbReference>
<dbReference type="PROSITE" id="PS00097">
    <property type="entry name" value="CARBAMOYLTRANSFERASE"/>
    <property type="match status" value="1"/>
</dbReference>
<protein>
    <recommendedName>
        <fullName evidence="1">Aspartate carbamoyltransferase catalytic subunit</fullName>
        <ecNumber evidence="1">2.1.3.2</ecNumber>
    </recommendedName>
    <alternativeName>
        <fullName evidence="1">Aspartate transcarbamylase</fullName>
        <shortName evidence="1">ATCase</shortName>
    </alternativeName>
</protein>
<organism>
    <name type="scientific">Streptococcus pyogenes serotype M12 (strain MGAS9429)</name>
    <dbReference type="NCBI Taxonomy" id="370551"/>
    <lineage>
        <taxon>Bacteria</taxon>
        <taxon>Bacillati</taxon>
        <taxon>Bacillota</taxon>
        <taxon>Bacilli</taxon>
        <taxon>Lactobacillales</taxon>
        <taxon>Streptococcaceae</taxon>
        <taxon>Streptococcus</taxon>
    </lineage>
</organism>